<proteinExistence type="evidence at protein level"/>
<comment type="function">
    <text evidence="7 8 11 12 15 16 17 18 19 20 22 26">Plays a role in pre-mRNA splicing as a core component of the spliceosomal U1, U2, U4 and U5 small nuclear ribonucleoproteins (snRNPs), the building blocks of the spliceosome (PubMed:11991638, PubMed:18984161, PubMed:19325628, PubMed:23333303, PubMed:25555158, PubMed:26912367, PubMed:28076346, PubMed:28502770, PubMed:28781166, PubMed:32494006). Component of both the pre-catalytic spliceosome B complex and activated spliceosome C complexes (PubMed:11991638, PubMed:26912367, PubMed:28076346, PubMed:28502770, PubMed:28781166). As a component of the minor spliceosome, involved in the splicing of U12-type introns in pre-mRNAs (PubMed:15146077). May act as a charged protein scaffold to promote snRNP assembly or strengthen snRNP-snRNP interactions through non-specific electrostatic contacts with RNA (PubMed:23333303).</text>
</comment>
<comment type="subunit">
    <text evidence="3 4 5 7 8 9 11 12 13 14 15 16 17 18 19 20 21 22 23 24">Core component of the spliceosomal U1, U2, U4 and U5 small nuclear ribonucleoproteins (snRNPs), the building blocks of the spliceosome (PubMed:11991638, PubMed:19325628, PubMed:25555158, PubMed:26912367, PubMed:28076346, PubMed:28502770, PubMed:28781166, PubMed:32494006, PubMed:36797247). Most spliceosomal snRNPs contain a common set of Sm proteins, SNRPB, SNRPD1, SNRPD2, SNRPD3, SNRPE, SNRPF and SNRPG that assemble in a heptameric protein ring on the Sm site of the small nuclear RNA to form the core snRNP (PubMed:10025403, PubMed:19325628, PubMed:21113136, PubMed:25555158, PubMed:26912367, PubMed:28076346, PubMed:28502770, PubMed:28781166). Component of the U1 snRNP (PubMed:19325628, PubMed:21113136, PubMed:25555158). The U1 snRNP is composed of the U1 snRNA and the 7 core Sm proteins SNRPB, SNRPD1, SNRPD2, SNRPD3, SNRPE, SNRPF and SNRPG, and at least three U1 snRNP-specific proteins SNRNP70/U1-70K, SNRPA/U1-A and SNRPC/U1-C (PubMed:19325628, PubMed:21113136, PubMed:25555158). Component of the U4/U6-U5 tri-snRNP complex composed of the U4, U6 and U5 snRNAs and at least PRPF3, PRPF4, PRPF6, PRPF8, PRPF31, SNRNP200, TXNL4A, SNRNP40, SNRPB, SNRPD1, SNRPD2, SNRPD3, SNRPE, SNRPF, SNRPG, DDX23, CD2BP2, PPIH, SNU13, EFTUD2, SART1 and USP39, plus LSM2, LSM3, LSM4, LSM5, LSM6, LSM7 and LSM8 (PubMed:26912367). Component of the minor spliceosome, which splices U12-type introns (PubMed:15146077, PubMed:33509932). Part of the SMN-Sm complex that contains SMN1, GEMIN2/SIP1, DDX20/GEMIN3, GEMIN4, GEMIN5, GEMIN6, GEMIN7, GEMIN8, STRAP/UNRIP and the Sm proteins SNRPB, SNRPD1, SNRPD2, SNRPD3, SNRPE, SNRPF and SNRPG; catalyzes core snRNPs assembly (PubMed:16314521). Forms a 6S pICln-Sm complex composed of CLNS1A/pICln, SNRPD1, SNRPD2, SNRPE, SNRPF and SNRPG; ring-like structure where CLNS1A/pICln mimics additional Sm proteins and which is unable to assemble into the core snRNP. Interacts (via C-terminus) with SMN1 (via Tudor domain); the interaction is direct (PubMed:10500148, PubMed:11135666). Interacts with GEMIN2; the interaction is direct (PubMed:21816274). Interacts with SNRPD2; the interaction is direct (PubMed:21816274, PubMed:31799625).</text>
</comment>
<comment type="interaction">
    <interactant intactId="EBI-372177">
        <id>P62314</id>
    </interactant>
    <interactant intactId="EBI-724693">
        <id>P54105</id>
        <label>CLNS1A</label>
    </interactant>
    <organismsDiffer>false</organismsDiffer>
    <experiments>13</experiments>
</comment>
<comment type="interaction">
    <interactant intactId="EBI-372177">
        <id>P62314</id>
    </interactant>
    <interactant intactId="EBI-752301">
        <id>Q8WXD5</id>
        <label>GEMIN6</label>
    </interactant>
    <organismsDiffer>false</organismsDiffer>
    <experiments>2</experiments>
</comment>
<comment type="interaction">
    <interactant intactId="EBI-372177">
        <id>P62314</id>
    </interactant>
    <interactant intactId="EBI-2462271">
        <id>Q15428</id>
        <label>SF3A2</label>
    </interactant>
    <organismsDiffer>false</organismsDiffer>
    <experiments>2</experiments>
</comment>
<comment type="interaction">
    <interactant intactId="EBI-372177">
        <id>P62314</id>
    </interactant>
    <interactant intactId="EBI-395421">
        <id>Q16637</id>
        <label>SMN2</label>
    </interactant>
    <organismsDiffer>false</organismsDiffer>
    <experiments>7</experiments>
</comment>
<comment type="interaction">
    <interactant intactId="EBI-372177">
        <id>P62314</id>
    </interactant>
    <interactant intactId="EBI-297993">
        <id>P62316</id>
        <label>SNRPD2</label>
    </interactant>
    <organismsDiffer>false</organismsDiffer>
    <experiments>4</experiments>
</comment>
<comment type="interaction">
    <interactant intactId="EBI-372177">
        <id>P62314</id>
    </interactant>
    <interactant intactId="EBI-3649474">
        <id>PRO_0000037573</id>
        <dbReference type="UniProtKB" id="P27958"/>
    </interactant>
    <organismsDiffer>true</organismsDiffer>
    <experiments>7</experiments>
</comment>
<comment type="subcellular location">
    <subcellularLocation>
        <location evidence="11">Cytoplasm</location>
        <location evidence="11">Cytosol</location>
    </subcellularLocation>
    <subcellularLocation>
        <location evidence="7 13 17 18 19 20">Nucleus</location>
    </subcellularLocation>
    <text evidence="25">SMN-mediated assembly into core snRNPs occurs in the cytosol before SMN-mediated transport to the nucleus to be included in spliceosomes.</text>
</comment>
<comment type="PTM">
    <text evidence="6 10">Methylated on arginine residues by PRMT5 and PRMT7; probable asymmetric dimethylation which is required for assembly and biogenesis of snRNPs.</text>
</comment>
<comment type="miscellaneous">
    <text>In the autoimmune disease systemic lupus erythematosus, antinuclear antibodies are developed with Sm specificity.</text>
</comment>
<comment type="similarity">
    <text evidence="25">Belongs to the snRNP core protein family.</text>
</comment>
<gene>
    <name type="primary">SNRPD1</name>
</gene>
<sequence length="119" mass="13282">MKLVRFLMKLSHETVTIELKNGTQVHGTITGVDVSMNTHLKAVKMTLKNREPVQLETLSIRGNNIRYFILPDSLPLDTLLVDVEPKVKSKKREAVAGRGRGRGRGRGRGRGRGRGGPRR</sequence>
<reference key="1">
    <citation type="journal article" date="1988" name="Proc. Natl. Acad. Sci. U.S.A.">
        <title>Molecular cloning of a cDNA encoding the human Sm-D autoantigen.</title>
        <authorList>
            <person name="Rokeach L.A."/>
            <person name="Haselby J.A."/>
            <person name="Hoch S.O."/>
        </authorList>
    </citation>
    <scope>NUCLEOTIDE SEQUENCE [MRNA]</scope>
    <scope>PROTEIN SEQUENCE OF 1-11</scope>
    <source>
        <tissue>Placenta</tissue>
    </source>
</reference>
<reference key="2">
    <citation type="submission" date="1988-07" db="EMBL/GenBank/DDBJ databases">
        <authorList>
            <person name="Rokeach L.A."/>
        </authorList>
    </citation>
    <scope>SEQUENCE REVISION</scope>
</reference>
<reference key="3">
    <citation type="journal article" date="1989" name="Clin. Chem.">
        <title>Expression of the major human ribonucleoprotein (RNP) autoantigens in Escherichia coli and their use in an EIA for screening sera from patients with autoimmune diseases.</title>
        <authorList>
            <person name="Renz M."/>
            <person name="Heim C."/>
            <person name="Braeunling O."/>
            <person name="Czichos A."/>
            <person name="Wieland C."/>
            <person name="Seelig H.P."/>
        </authorList>
    </citation>
    <scope>NUCLEOTIDE SEQUENCE [MRNA]</scope>
</reference>
<reference key="4">
    <citation type="submission" date="2004-06" db="EMBL/GenBank/DDBJ databases">
        <title>Cloning of human full open reading frames in Gateway(TM) system entry vector (pDONR201).</title>
        <authorList>
            <person name="Ebert L."/>
            <person name="Schick M."/>
            <person name="Neubert P."/>
            <person name="Schatten R."/>
            <person name="Henze S."/>
            <person name="Korn B."/>
        </authorList>
    </citation>
    <scope>NUCLEOTIDE SEQUENCE [LARGE SCALE MRNA]</scope>
</reference>
<reference key="5">
    <citation type="submission" date="2005-07" db="EMBL/GenBank/DDBJ databases">
        <authorList>
            <person name="Mural R.J."/>
            <person name="Istrail S."/>
            <person name="Sutton G.G."/>
            <person name="Florea L."/>
            <person name="Halpern A.L."/>
            <person name="Mobarry C.M."/>
            <person name="Lippert R."/>
            <person name="Walenz B."/>
            <person name="Shatkay H."/>
            <person name="Dew I."/>
            <person name="Miller J.R."/>
            <person name="Flanigan M.J."/>
            <person name="Edwards N.J."/>
            <person name="Bolanos R."/>
            <person name="Fasulo D."/>
            <person name="Halldorsson B.V."/>
            <person name="Hannenhalli S."/>
            <person name="Turner R."/>
            <person name="Yooseph S."/>
            <person name="Lu F."/>
            <person name="Nusskern D.R."/>
            <person name="Shue B.C."/>
            <person name="Zheng X.H."/>
            <person name="Zhong F."/>
            <person name="Delcher A.L."/>
            <person name="Huson D.H."/>
            <person name="Kravitz S.A."/>
            <person name="Mouchard L."/>
            <person name="Reinert K."/>
            <person name="Remington K.A."/>
            <person name="Clark A.G."/>
            <person name="Waterman M.S."/>
            <person name="Eichler E.E."/>
            <person name="Adams M.D."/>
            <person name="Hunkapiller M.W."/>
            <person name="Myers E.W."/>
            <person name="Venter J.C."/>
        </authorList>
    </citation>
    <scope>NUCLEOTIDE SEQUENCE [LARGE SCALE GENOMIC DNA]</scope>
</reference>
<reference key="6">
    <citation type="journal article" date="2008" name="Nat. Methods">
        <title>Human protein factory for converting the transcriptome into an in vitro-expressed proteome.</title>
        <authorList>
            <person name="Goshima N."/>
            <person name="Kawamura Y."/>
            <person name="Fukumoto A."/>
            <person name="Miura A."/>
            <person name="Honma R."/>
            <person name="Satoh R."/>
            <person name="Wakamatsu A."/>
            <person name="Yamamoto J."/>
            <person name="Kimura K."/>
            <person name="Nishikawa T."/>
            <person name="Andoh T."/>
            <person name="Iida Y."/>
            <person name="Ishikawa K."/>
            <person name="Ito E."/>
            <person name="Kagawa N."/>
            <person name="Kaminaga C."/>
            <person name="Kanehori K."/>
            <person name="Kawakami B."/>
            <person name="Kenmochi K."/>
            <person name="Kimura R."/>
            <person name="Kobayashi M."/>
            <person name="Kuroita T."/>
            <person name="Kuwayama H."/>
            <person name="Maruyama Y."/>
            <person name="Matsuo K."/>
            <person name="Minami K."/>
            <person name="Mitsubori M."/>
            <person name="Mori M."/>
            <person name="Morishita R."/>
            <person name="Murase A."/>
            <person name="Nishikawa A."/>
            <person name="Nishikawa S."/>
            <person name="Okamoto T."/>
            <person name="Sakagami N."/>
            <person name="Sakamoto Y."/>
            <person name="Sasaki Y."/>
            <person name="Seki T."/>
            <person name="Sono S."/>
            <person name="Sugiyama A."/>
            <person name="Sumiya T."/>
            <person name="Takayama T."/>
            <person name="Takayama Y."/>
            <person name="Takeda H."/>
            <person name="Togashi T."/>
            <person name="Yahata K."/>
            <person name="Yamada H."/>
            <person name="Yanagisawa Y."/>
            <person name="Endo Y."/>
            <person name="Imamoto F."/>
            <person name="Kisu Y."/>
            <person name="Tanaka S."/>
            <person name="Isogai T."/>
            <person name="Imai J."/>
            <person name="Watanabe S."/>
            <person name="Nomura N."/>
        </authorList>
    </citation>
    <scope>NUCLEOTIDE SEQUENCE [LARGE SCALE MRNA]</scope>
</reference>
<reference key="7">
    <citation type="journal article" date="2004" name="Genome Res.">
        <title>The status, quality, and expansion of the NIH full-length cDNA project: the Mammalian Gene Collection (MGC).</title>
        <authorList>
            <consortium name="The MGC Project Team"/>
        </authorList>
    </citation>
    <scope>NUCLEOTIDE SEQUENCE [LARGE SCALE MRNA]</scope>
    <source>
        <tissue>Eye</tissue>
    </source>
</reference>
<reference key="8">
    <citation type="journal article" date="1999" name="Proc. Natl. Acad. Sci. U.S.A.">
        <title>SMN mutants of spinal muscular atrophy patients are defective in binding to snRNP proteins.</title>
        <authorList>
            <person name="Pellizzoni L."/>
            <person name="Charroux B."/>
            <person name="Dreyfuss G."/>
        </authorList>
    </citation>
    <scope>INTERACTION WITH SMN1</scope>
</reference>
<reference key="9">
    <citation type="journal article" date="2001" name="Curr. Biol.">
        <title>Methylation of Sm proteins by a complex containing PRMT5 and the putative U snRNP assembly factor pICln.</title>
        <authorList>
            <person name="Meister G."/>
            <person name="Eggert C."/>
            <person name="Buehler D."/>
            <person name="Brahms H."/>
            <person name="Kambach C."/>
            <person name="Fischer U."/>
        </authorList>
    </citation>
    <scope>METHYLATION</scope>
    <scope>INTERACTION WITH CLNS1A</scope>
    <scope>MUTAGENESIS OF LEU-58 AND ILE-60</scope>
</reference>
<reference key="10">
    <citation type="journal article" date="2001" name="Nat. Struct. Biol.">
        <title>SMN tudor domain structure and its interaction with the Sm proteins.</title>
        <authorList>
            <person name="Selenko P."/>
            <person name="Sprangers R."/>
            <person name="Stier G."/>
            <person name="Buhler D."/>
            <person name="Fischer U."/>
            <person name="Sattler M."/>
        </authorList>
    </citation>
    <scope>INTERACTION WITH SMN1</scope>
</reference>
<reference key="11">
    <citation type="journal article" date="2002" name="RNA">
        <title>Purification and characterization of native spliceosomes suitable for three-dimensional structural analysis.</title>
        <authorList>
            <person name="Jurica M.S."/>
            <person name="Licklider L.J."/>
            <person name="Gygi S.P."/>
            <person name="Grigorieff N."/>
            <person name="Moore M.J."/>
        </authorList>
    </citation>
    <scope>IDENTIFICATION BY MASS SPECTROMETRY</scope>
    <scope>IDENTIFICATION IN THE SPLICEOSOMAL C COMPLEX</scope>
    <scope>FUNCTION</scope>
    <scope>SUBCELLULAR LOCATION</scope>
    <scope>SUBUNIT</scope>
</reference>
<reference key="12">
    <citation type="journal article" date="2004" name="RNA">
        <title>The human 18S U11/U12 snRNP contains a set of novel proteins not found in the U2-dependent spliceosome.</title>
        <authorList>
            <person name="Will C.L."/>
            <person name="Schneider C."/>
            <person name="Hossbach M."/>
            <person name="Urlaub H."/>
            <person name="Rauhut R."/>
            <person name="Elbashir S."/>
            <person name="Tuschl T."/>
            <person name="Luehrmann R."/>
        </authorList>
    </citation>
    <scope>IDENTIFICATION IN A COMPLEX WITH THE MINOR SPLICEOSOME</scope>
    <scope>IDENTIFICATION BY MASS SPECTROMETRY</scope>
</reference>
<reference key="13">
    <citation type="journal article" date="2005" name="Mol. Cell. Biol.">
        <title>Specific sequence features, recognized by the SMN complex, identify snRNAs and determine their fate as snRNPs.</title>
        <authorList>
            <person name="Golembe T.J."/>
            <person name="Yong J."/>
            <person name="Dreyfuss G."/>
        </authorList>
    </citation>
    <scope>IDENTIFICATION IN THE SMN-SM COMPLEX</scope>
</reference>
<reference key="14">
    <citation type="journal article" date="2007" name="J. Cell Biol.">
        <title>Two distinct arginine methyltransferases are required for biogenesis of Sm-class ribonucleoproteins.</title>
        <authorList>
            <person name="Gonsalvez G.B."/>
            <person name="Tian L."/>
            <person name="Ospina J.K."/>
            <person name="Boisvert F.-M."/>
            <person name="Lamond A.I."/>
            <person name="Matera A.G."/>
        </authorList>
    </citation>
    <scope>METHYLATION</scope>
    <scope>INTERACTION WITH PRMT5 AND PRMT7</scope>
</reference>
<reference key="15">
    <citation type="journal article" date="2008" name="Cell">
        <title>An assembly chaperone collaborates with the SMN complex to generate spliceosomal SnRNPs.</title>
        <authorList>
            <person name="Chari A."/>
            <person name="Golas M.M."/>
            <person name="Klingenhager M."/>
            <person name="Neuenkirchen N."/>
            <person name="Sander B."/>
            <person name="Englbrecht C."/>
            <person name="Sickmann A."/>
            <person name="Stark H."/>
            <person name="Fischer U."/>
        </authorList>
    </citation>
    <scope>FUNCTION IN SNRNP BIOGENESIS</scope>
    <scope>IDENTIFICATION IN 6S PICLN-SM COMPLEX</scope>
    <scope>IDENTIFICATION IN SMN-SM COMPLEX</scope>
    <scope>SUBCELLULAR LOCATION</scope>
</reference>
<reference key="16">
    <citation type="journal article" date="2011" name="BMC Syst. Biol.">
        <title>Initial characterization of the human central proteome.</title>
        <authorList>
            <person name="Burkard T.R."/>
            <person name="Planyavsky M."/>
            <person name="Kaupe I."/>
            <person name="Breitwieser F.P."/>
            <person name="Buerckstuemmer T."/>
            <person name="Bennett K.L."/>
            <person name="Superti-Furga G."/>
            <person name="Colinge J."/>
        </authorList>
    </citation>
    <scope>IDENTIFICATION BY MASS SPECTROMETRY [LARGE SCALE ANALYSIS]</scope>
</reference>
<reference key="17">
    <citation type="journal article" date="2017" name="Nat. Struct. Mol. Biol.">
        <title>Site-specific mapping of the human SUMO proteome reveals co-modification with phosphorylation.</title>
        <authorList>
            <person name="Hendriks I.A."/>
            <person name="Lyon D."/>
            <person name="Young C."/>
            <person name="Jensen L.J."/>
            <person name="Vertegaal A.C."/>
            <person name="Nielsen M.L."/>
        </authorList>
    </citation>
    <scope>SUMOYLATION [LARGE SCALE ANALYSIS] AT LYS-86</scope>
    <scope>IDENTIFICATION BY MASS SPECTROMETRY [LARGE SCALE ANALYSIS]</scope>
</reference>
<reference key="18">
    <citation type="journal article" date="1999" name="Cell">
        <title>Crystal structures of two Sm protein complexes and their implications for the assembly of the spliceosomal snRNPs.</title>
        <authorList>
            <person name="Kambach C."/>
            <person name="Walke S."/>
            <person name="Young R."/>
            <person name="Avis J.M."/>
            <person name="de la Fortelle E."/>
            <person name="Raker V.A."/>
            <person name="Luehrmann R."/>
            <person name="Li J."/>
            <person name="Nagai K."/>
        </authorList>
    </citation>
    <scope>X-RAY CRYSTALLOGRAPHY (2.5 ANGSTROMS) OF 2-81 IN COMPLEX WITH SNRPD2</scope>
</reference>
<reference key="19">
    <citation type="journal article" date="2009" name="Nature">
        <title>Crystal structure of human spliceosomal U1 snRNP at 5.5 A resolution.</title>
        <authorList>
            <person name="Pomeranz Krummel D.A."/>
            <person name="Oubridge C."/>
            <person name="Leung A.K."/>
            <person name="Li J."/>
            <person name="Nagai K."/>
        </authorList>
    </citation>
    <scope>X-RAY CRYSTALLOGRAPHY (5.49 ANGSTROMS) IN SPLICEOSOMAL U1 SNRNP</scope>
    <scope>FUNCTION</scope>
    <scope>SUBUNIT</scope>
</reference>
<reference key="20">
    <citation type="journal article" date="2010" name="EMBO J.">
        <title>Functional organization of the Sm core in the crystal structure of human U1 snRNP.</title>
        <authorList>
            <person name="Weber G."/>
            <person name="Trowitzsch S."/>
            <person name="Kastner B."/>
            <person name="Luhrmann R."/>
            <person name="Wahl M.C."/>
        </authorList>
    </citation>
    <scope>X-RAY CRYSTALLOGRAPHY (4.40 ANGSTROMS) IN SPLICEOSOMAL U1 SNRNP</scope>
    <scope>SUBCELLULAR LOCATION</scope>
    <scope>SUBUNIT</scope>
    <scope>IDENTIFICATION BY MASS SPECTROMETRY</scope>
</reference>
<reference evidence="32" key="21">
    <citation type="journal article" date="2011" name="Cell">
        <title>Structure of a key intermediate of the SMN complex reveals Gemin2's crucial function in snRNP assembly.</title>
        <authorList>
            <person name="Zhang R."/>
            <person name="So B.R."/>
            <person name="Li P."/>
            <person name="Yong J."/>
            <person name="Glisovic T."/>
            <person name="Wan L."/>
            <person name="Dreyfuss G."/>
        </authorList>
    </citation>
    <scope>X-RAY CRYSTALLOGRAPHY (2.50 ANGSTROMS) IN COMPLEX WITH SNRPD2; SNRPE; SNRPF; SNRPG; SMN1 AND GEMIN2</scope>
    <scope>INTERACTION WITH GEMIN2 AND SNRPD2</scope>
</reference>
<reference key="22">
    <citation type="journal article" date="2011" name="Nature">
        <title>Structure of the spliceosomal U4 snRNP core domain and its implication for snRNP biogenesis.</title>
        <authorList>
            <person name="Leung A.K."/>
            <person name="Nagai K."/>
            <person name="Li J."/>
        </authorList>
    </citation>
    <scope>X-RAY CRYSTALLOGRAPHY (3.60 ANGSTROMS) IN SPLICEOSOMAL CORE U4 SNRNP</scope>
    <scope>SUBUNIT</scope>
</reference>
<reference key="23">
    <citation type="journal article" date="2013" name="Mol. Cell">
        <title>Structural basis of assembly chaperone-mediated snRNP formation.</title>
        <authorList>
            <person name="Grimm C."/>
            <person name="Chari A."/>
            <person name="Pelz J.P."/>
            <person name="Kuper J."/>
            <person name="Kisker C."/>
            <person name="Diederichs K."/>
            <person name="Stark H."/>
            <person name="Schindelin H."/>
            <person name="Fischer U."/>
        </authorList>
    </citation>
    <scope>X-RAY CRYSTALLOGRAPHY (1.90 ANGSTROMS) IN 6S PICLN-SM COMPLEX</scope>
    <scope>IDENTIFICATION IN 6S PICLN-SM COMPLEX</scope>
    <scope>FUNCTION IN CORE U1 SNRNP BIOGENESIS</scope>
</reference>
<reference evidence="28" key="24">
    <citation type="journal article" date="2015" name="Elife">
        <title>Crystal structure of human U1 snRNP, a small nuclear ribonucleoprotein particle, reveals the mechanism of 5' splice site recognition.</title>
        <authorList>
            <person name="Kondo Y."/>
            <person name="Oubridge C."/>
            <person name="van Roon A.M."/>
            <person name="Nagai K."/>
        </authorList>
    </citation>
    <scope>X-RAY CRYSTALLOGRAPHY (3.30 ANGSTROMS) OF 2-85</scope>
    <scope>SUBUNIT</scope>
</reference>
<reference evidence="27" key="25">
    <citation type="journal article" date="2016" name="Science">
        <title>Molecular architecture of the human U4/U6.U5 tri-snRNP.</title>
        <authorList>
            <person name="Agafonov D.E."/>
            <person name="Kastner B."/>
            <person name="Dybkov O."/>
            <person name="Hofele R.V."/>
            <person name="Liu W.T."/>
            <person name="Urlaub H."/>
            <person name="Luhrmann R."/>
            <person name="Stark H."/>
        </authorList>
    </citation>
    <scope>STRUCTURE BY ELECTRON MICROSCOPY (7.00 ANGSTROMS)</scope>
    <scope>SUBCELLULAR LOCATION</scope>
    <scope>SUBUNIT</scope>
    <scope>IDENTIFICATION BY MASS SPECTROMETRY</scope>
</reference>
<reference evidence="31" key="26">
    <citation type="journal article" date="2017" name="Cell">
        <title>An Atomic Structure of the Human Spliceosome.</title>
        <authorList>
            <person name="Zhang X."/>
            <person name="Yan C."/>
            <person name="Hang J."/>
            <person name="Finci L.I."/>
            <person name="Lei J."/>
            <person name="Shi Y."/>
        </authorList>
    </citation>
    <scope>STRUCTURE BY ELECTRON MICROSCOPY (3.60 ANGSTROMS)</scope>
    <scope>FUNCTION</scope>
    <scope>SUBCELLULAR LOCATION</scope>
    <scope>SUBUNIT</scope>
</reference>
<reference evidence="30" key="27">
    <citation type="journal article" date="2017" name="Cell">
        <title>Cryo-EM Structure of a Pre-catalytic Human Spliceosome Primed for Activation.</title>
        <authorList>
            <person name="Bertram K."/>
            <person name="Agafonov D.E."/>
            <person name="Dybkov O."/>
            <person name="Haselbach D."/>
            <person name="Leelaram M.N."/>
            <person name="Will C.L."/>
            <person name="Urlaub H."/>
            <person name="Kastner B."/>
            <person name="Luhrmann R."/>
            <person name="Stark H."/>
        </authorList>
    </citation>
    <scope>STRUCTURE BY ELECTRON MICROSCOPY (4.50 ANGSTROMS)</scope>
    <scope>FUNCTION</scope>
    <scope>SUBCELLULAR LOCATION</scope>
    <scope>SUBUNIT</scope>
    <scope>IDENTIFICATION BY MASS SPECTROMETRY</scope>
</reference>
<reference evidence="29" key="28">
    <citation type="journal article" date="2017" name="Nature">
        <title>Cryo-EM structure of a human spliceosome activated for step 2 of splicing.</title>
        <authorList>
            <person name="Bertram K."/>
            <person name="Agafonov D.E."/>
            <person name="Liu W.T."/>
            <person name="Dybkov O."/>
            <person name="Will C.L."/>
            <person name="Hartmuth K."/>
            <person name="Urlaub H."/>
            <person name="Kastner B."/>
            <person name="Stark H."/>
            <person name="Luhrmann R."/>
        </authorList>
    </citation>
    <scope>STRUCTURE BY ELECTRON MICROSCOPY (5.90 ANGSTROMS)</scope>
    <scope>FUNCTION</scope>
    <scope>SUBCELLULAR LOCATION</scope>
    <scope>SUBUNIT</scope>
    <scope>IDENTIFICATION BY MASS SPECTROMETRY</scope>
</reference>
<reference evidence="33 34 35" key="29">
    <citation type="journal article" date="2020" name="Nucleic Acids Res.">
        <title>Negative cooperativity between Gemin2 and RNA provides insights into RNA selection and the SMN complex's release in snRNP assembly.</title>
        <authorList>
            <person name="Yi H."/>
            <person name="Mu L."/>
            <person name="Shen C."/>
            <person name="Kong X."/>
            <person name="Wang Y."/>
            <person name="Hou Y."/>
            <person name="Zhang R."/>
        </authorList>
    </citation>
    <scope>X-RAY CRYSTALLOGRAPHY (3.12 ANGSTROMS) OF 1-82 IN COMPLEX WITH GEMIN2; SNRPD2; SNRPE; SNRPF; SNRPG AND SMN1</scope>
    <scope>INTERACTION WITH GEMIN2 AND SNRPD2</scope>
</reference>
<reference evidence="36" key="30">
    <citation type="journal article" date="2020" name="Nature">
        <title>Molecular architecture of the human 17S U2 snRNP.</title>
        <authorList>
            <person name="Zhang Z."/>
            <person name="Will C.L."/>
            <person name="Bertram K."/>
            <person name="Dybkov O."/>
            <person name="Hartmuth K."/>
            <person name="Agafonov D.E."/>
            <person name="Hofele R."/>
            <person name="Urlaub H."/>
            <person name="Kastner B."/>
            <person name="Luehrmann R."/>
            <person name="Stark H."/>
        </authorList>
    </citation>
    <scope>STRUCTURE BY ELECTRON MICROSCOPY (4.10 ANGSTROMS) IN COMPLEX WITH THE 17S U2 SNRNP COMPLEX</scope>
    <scope>FUNCTION</scope>
    <scope>IDENTIFICATION IN THE 17S U2 SNRNP COMPLEX</scope>
</reference>
<reference evidence="37" key="31">
    <citation type="journal article" date="2021" name="Science">
        <title>Structure of the activated human minor spliceosome.</title>
        <authorList>
            <person name="Bai R."/>
            <person name="Wan R."/>
            <person name="Wang L."/>
            <person name="Xu K."/>
            <person name="Zhang Q."/>
            <person name="Lei J."/>
            <person name="Shi Y."/>
        </authorList>
    </citation>
    <scope>STRUCTURE BY ELECTRON MICROSCOPY (2.89 ANGSTROMS)</scope>
    <scope>SUBUNIT</scope>
</reference>
<reference evidence="38" key="32">
    <citation type="journal article" date="2023" name="Nat. Commun.">
        <title>Mechanisms of the RNA helicases DDX42 and DDX46 in human U2 snRNP assembly.</title>
        <authorList>
            <person name="Yang F."/>
            <person name="Bian T."/>
            <person name="Zhan X."/>
            <person name="Chen Z."/>
            <person name="Xing Z."/>
            <person name="Larsen N.A."/>
            <person name="Zhang X."/>
            <person name="Shi Y."/>
        </authorList>
    </citation>
    <scope>STRUCTURE BY ELECTRON MICROSCOPY (2.70 ANGSTROMS) IN COMPLEX WITH THE 17S U2 SNRNP COMPLEX</scope>
    <scope>IDENTIFICATION IN THE 17S U2 SNRNP COMPLEX</scope>
</reference>
<keyword id="KW-0002">3D-structure</keyword>
<keyword id="KW-0963">Cytoplasm</keyword>
<keyword id="KW-0903">Direct protein sequencing</keyword>
<keyword id="KW-1017">Isopeptide bond</keyword>
<keyword id="KW-0488">Methylation</keyword>
<keyword id="KW-0507">mRNA processing</keyword>
<keyword id="KW-0508">mRNA splicing</keyword>
<keyword id="KW-0539">Nucleus</keyword>
<keyword id="KW-1267">Proteomics identification</keyword>
<keyword id="KW-1185">Reference proteome</keyword>
<keyword id="KW-0677">Repeat</keyword>
<keyword id="KW-0687">Ribonucleoprotein</keyword>
<keyword id="KW-0747">Spliceosome</keyword>
<keyword id="KW-0832">Ubl conjugation</keyword>
<organism>
    <name type="scientific">Homo sapiens</name>
    <name type="common">Human</name>
    <dbReference type="NCBI Taxonomy" id="9606"/>
    <lineage>
        <taxon>Eukaryota</taxon>
        <taxon>Metazoa</taxon>
        <taxon>Chordata</taxon>
        <taxon>Craniata</taxon>
        <taxon>Vertebrata</taxon>
        <taxon>Euteleostomi</taxon>
        <taxon>Mammalia</taxon>
        <taxon>Eutheria</taxon>
        <taxon>Euarchontoglires</taxon>
        <taxon>Primates</taxon>
        <taxon>Haplorrhini</taxon>
        <taxon>Catarrhini</taxon>
        <taxon>Hominidae</taxon>
        <taxon>Homo</taxon>
    </lineage>
</organism>
<evidence type="ECO:0000255" key="1">
    <source>
        <dbReference type="PROSITE-ProRule" id="PRU01346"/>
    </source>
</evidence>
<evidence type="ECO:0000256" key="2">
    <source>
        <dbReference type="SAM" id="MobiDB-lite"/>
    </source>
</evidence>
<evidence type="ECO:0000269" key="3">
    <source>
    </source>
</evidence>
<evidence type="ECO:0000269" key="4">
    <source>
    </source>
</evidence>
<evidence type="ECO:0000269" key="5">
    <source>
    </source>
</evidence>
<evidence type="ECO:0000269" key="6">
    <source>
    </source>
</evidence>
<evidence type="ECO:0000269" key="7">
    <source>
    </source>
</evidence>
<evidence type="ECO:0000269" key="8">
    <source>
    </source>
</evidence>
<evidence type="ECO:0000269" key="9">
    <source>
    </source>
</evidence>
<evidence type="ECO:0000269" key="10">
    <source>
    </source>
</evidence>
<evidence type="ECO:0000269" key="11">
    <source>
    </source>
</evidence>
<evidence type="ECO:0000269" key="12">
    <source>
    </source>
</evidence>
<evidence type="ECO:0000269" key="13">
    <source>
    </source>
</evidence>
<evidence type="ECO:0000269" key="14">
    <source>
    </source>
</evidence>
<evidence type="ECO:0000269" key="15">
    <source>
    </source>
</evidence>
<evidence type="ECO:0000269" key="16">
    <source>
    </source>
</evidence>
<evidence type="ECO:0000269" key="17">
    <source>
    </source>
</evidence>
<evidence type="ECO:0000269" key="18">
    <source>
    </source>
</evidence>
<evidence type="ECO:0000269" key="19">
    <source>
    </source>
</evidence>
<evidence type="ECO:0000269" key="20">
    <source>
    </source>
</evidence>
<evidence type="ECO:0000269" key="21">
    <source>
    </source>
</evidence>
<evidence type="ECO:0000269" key="22">
    <source>
    </source>
</evidence>
<evidence type="ECO:0000269" key="23">
    <source>
    </source>
</evidence>
<evidence type="ECO:0000269" key="24">
    <source>
    </source>
</evidence>
<evidence type="ECO:0000305" key="25"/>
<evidence type="ECO:0000305" key="26">
    <source>
    </source>
</evidence>
<evidence type="ECO:0007744" key="27">
    <source>
        <dbReference type="PDB" id="3JCR"/>
    </source>
</evidence>
<evidence type="ECO:0007744" key="28">
    <source>
        <dbReference type="PDB" id="4PJO"/>
    </source>
</evidence>
<evidence type="ECO:0007744" key="29">
    <source>
        <dbReference type="PDB" id="5MQF"/>
    </source>
</evidence>
<evidence type="ECO:0007744" key="30">
    <source>
        <dbReference type="PDB" id="5O9Z"/>
    </source>
</evidence>
<evidence type="ECO:0007744" key="31">
    <source>
        <dbReference type="PDB" id="5XJC"/>
    </source>
</evidence>
<evidence type="ECO:0007744" key="32">
    <source>
        <dbReference type="PDB" id="5XJL"/>
    </source>
</evidence>
<evidence type="ECO:0007744" key="33">
    <source>
        <dbReference type="PDB" id="5XJQ"/>
    </source>
</evidence>
<evidence type="ECO:0007744" key="34">
    <source>
        <dbReference type="PDB" id="5XJR"/>
    </source>
</evidence>
<evidence type="ECO:0007744" key="35">
    <source>
        <dbReference type="PDB" id="5XJS"/>
    </source>
</evidence>
<evidence type="ECO:0007744" key="36">
    <source>
        <dbReference type="PDB" id="6Y5Q"/>
    </source>
</evidence>
<evidence type="ECO:0007744" key="37">
    <source>
        <dbReference type="PDB" id="7DVQ"/>
    </source>
</evidence>
<evidence type="ECO:0007744" key="38">
    <source>
        <dbReference type="PDB" id="8HK1"/>
    </source>
</evidence>
<evidence type="ECO:0007744" key="39">
    <source>
    </source>
</evidence>
<evidence type="ECO:0007829" key="40">
    <source>
        <dbReference type="PDB" id="1B34"/>
    </source>
</evidence>
<evidence type="ECO:0007829" key="41">
    <source>
        <dbReference type="PDB" id="5XJR"/>
    </source>
</evidence>
<evidence type="ECO:0007829" key="42">
    <source>
        <dbReference type="PDB" id="6ID1"/>
    </source>
</evidence>
<evidence type="ECO:0007829" key="43">
    <source>
        <dbReference type="PDB" id="7QTT"/>
    </source>
</evidence>
<protein>
    <recommendedName>
        <fullName>Small nuclear ribonucleoprotein Sm D1</fullName>
        <shortName>Sm-D1</shortName>
    </recommendedName>
    <alternativeName>
        <fullName>Sm-D autoantigen</fullName>
    </alternativeName>
    <alternativeName>
        <fullName>snRNP core protein D1</fullName>
    </alternativeName>
</protein>
<accession>P62314</accession>
<accession>B5BTZ1</accession>
<accession>P13641</accession>
<name>SMD1_HUMAN</name>
<feature type="chain" id="PRO_0000122201" description="Small nuclear ribonucleoprotein Sm D1">
    <location>
        <begin position="1"/>
        <end position="119"/>
    </location>
</feature>
<feature type="domain" description="Sm" evidence="1">
    <location>
        <begin position="2"/>
        <end position="74"/>
    </location>
</feature>
<feature type="region of interest" description="Sufficient for interaction with CLNS1A" evidence="6">
    <location>
        <begin position="1"/>
        <end position="80"/>
    </location>
</feature>
<feature type="region of interest" description="Required for interaction with SMN1" evidence="5">
    <location>
        <begin position="69"/>
        <end position="119"/>
    </location>
</feature>
<feature type="region of interest" description="Disordered" evidence="2">
    <location>
        <begin position="88"/>
        <end position="119"/>
    </location>
</feature>
<feature type="compositionally biased region" description="Basic residues" evidence="2">
    <location>
        <begin position="99"/>
        <end position="119"/>
    </location>
</feature>
<feature type="cross-link" description="Glycyl lysine isopeptide (Lys-Gly) (interchain with G-Cter in SUMO2)" evidence="39">
    <location>
        <position position="86"/>
    </location>
</feature>
<feature type="mutagenesis site" description="Loss of interaction with CLNS1A." evidence="6">
    <original>L</original>
    <variation>K</variation>
    <location>
        <position position="58"/>
    </location>
</feature>
<feature type="mutagenesis site" description="Loss of interaction with CLNS1A." evidence="6">
    <original>I</original>
    <variation>R</variation>
    <location>
        <position position="60"/>
    </location>
</feature>
<feature type="helix" evidence="40">
    <location>
        <begin position="3"/>
        <end position="8"/>
    </location>
</feature>
<feature type="turn" evidence="42">
    <location>
        <begin position="9"/>
        <end position="12"/>
    </location>
</feature>
<feature type="strand" evidence="40">
    <location>
        <begin position="14"/>
        <end position="19"/>
    </location>
</feature>
<feature type="strand" evidence="40">
    <location>
        <begin position="24"/>
        <end position="32"/>
    </location>
</feature>
<feature type="strand" evidence="43">
    <location>
        <begin position="34"/>
        <end position="36"/>
    </location>
</feature>
<feature type="strand" evidence="40">
    <location>
        <begin position="38"/>
        <end position="46"/>
    </location>
</feature>
<feature type="strand" evidence="41">
    <location>
        <begin position="48"/>
        <end position="50"/>
    </location>
</feature>
<feature type="strand" evidence="40">
    <location>
        <begin position="53"/>
        <end position="60"/>
    </location>
</feature>
<feature type="helix" evidence="40">
    <location>
        <begin position="62"/>
        <end position="64"/>
    </location>
</feature>
<feature type="strand" evidence="40">
    <location>
        <begin position="65"/>
        <end position="69"/>
    </location>
</feature>
<feature type="helix" evidence="40">
    <location>
        <begin position="76"/>
        <end position="79"/>
    </location>
</feature>
<dbReference type="EMBL" id="J03798">
    <property type="protein sequence ID" value="AAA36620.1"/>
    <property type="molecule type" value="mRNA"/>
</dbReference>
<dbReference type="EMBL" id="L36188">
    <property type="protein sequence ID" value="AAA85339.1"/>
    <property type="molecule type" value="Genomic_DNA"/>
</dbReference>
<dbReference type="EMBL" id="L36182">
    <property type="protein sequence ID" value="AAA85339.1"/>
    <property type="status" value="JOINED"/>
    <property type="molecule type" value="Genomic_DNA"/>
</dbReference>
<dbReference type="EMBL" id="L36186">
    <property type="protein sequence ID" value="AAA85339.1"/>
    <property type="status" value="JOINED"/>
    <property type="molecule type" value="Genomic_DNA"/>
</dbReference>
<dbReference type="EMBL" id="L36187">
    <property type="protein sequence ID" value="AAA85339.1"/>
    <property type="status" value="JOINED"/>
    <property type="molecule type" value="Genomic_DNA"/>
</dbReference>
<dbReference type="EMBL" id="CR542239">
    <property type="protein sequence ID" value="CAG47035.1"/>
    <property type="molecule type" value="mRNA"/>
</dbReference>
<dbReference type="EMBL" id="AB451227">
    <property type="protein sequence ID" value="BAG70041.1"/>
    <property type="molecule type" value="mRNA"/>
</dbReference>
<dbReference type="EMBL" id="AB451350">
    <property type="protein sequence ID" value="BAG70164.1"/>
    <property type="molecule type" value="mRNA"/>
</dbReference>
<dbReference type="EMBL" id="CH471088">
    <property type="protein sequence ID" value="EAX01130.1"/>
    <property type="molecule type" value="Genomic_DNA"/>
</dbReference>
<dbReference type="EMBL" id="BC001721">
    <property type="protein sequence ID" value="AAH01721.1"/>
    <property type="molecule type" value="mRNA"/>
</dbReference>
<dbReference type="EMBL" id="BC072427">
    <property type="protein sequence ID" value="AAH72427.1"/>
    <property type="molecule type" value="mRNA"/>
</dbReference>
<dbReference type="CCDS" id="CCDS32801.1"/>
<dbReference type="PIR" id="A94201">
    <property type="entry name" value="A27668"/>
</dbReference>
<dbReference type="RefSeq" id="NP_001278845.1">
    <property type="nucleotide sequence ID" value="NM_001291916.1"/>
</dbReference>
<dbReference type="RefSeq" id="NP_008869.1">
    <property type="nucleotide sequence ID" value="NM_006938.4"/>
</dbReference>
<dbReference type="PDB" id="1B34">
    <property type="method" value="X-ray"/>
    <property type="resolution" value="2.50 A"/>
    <property type="chains" value="A=1-119"/>
</dbReference>
<dbReference type="PDB" id="3CW1">
    <property type="method" value="X-ray"/>
    <property type="resolution" value="5.49 A"/>
    <property type="chains" value="B/M/N/O=1-119"/>
</dbReference>
<dbReference type="PDB" id="3JCR">
    <property type="method" value="EM"/>
    <property type="resolution" value="7.00 A"/>
    <property type="chains" value="P/p=1-119"/>
</dbReference>
<dbReference type="PDB" id="3PGW">
    <property type="method" value="X-ray"/>
    <property type="resolution" value="4.40 A"/>
    <property type="chains" value="U/X=1-119"/>
</dbReference>
<dbReference type="PDB" id="4F7U">
    <property type="method" value="X-ray"/>
    <property type="resolution" value="1.90 A"/>
    <property type="chains" value="A/C=1-119"/>
</dbReference>
<dbReference type="PDB" id="4PJO">
    <property type="method" value="X-ray"/>
    <property type="resolution" value="3.30 A"/>
    <property type="chains" value="C/Q/c/q=2-85"/>
</dbReference>
<dbReference type="PDB" id="4V98">
    <property type="method" value="X-ray"/>
    <property type="resolution" value="3.10 A"/>
    <property type="chains" value="AA/AI/AQ/AY/Ag/Ao/Aw/BA/BI/BQ/BY/Bg/Bo/Bw/CA/CI/CQ/CY/Cg/Co=1-119"/>
</dbReference>
<dbReference type="PDB" id="4WZJ">
    <property type="method" value="X-ray"/>
    <property type="resolution" value="3.60 A"/>
    <property type="chains" value="AB/AI/AP/BB/BI/BP/CB/CI/CP/DB/DI/DP=1-119"/>
</dbReference>
<dbReference type="PDB" id="5MQF">
    <property type="method" value="EM"/>
    <property type="resolution" value="5.90 A"/>
    <property type="chains" value="g/n=1-119"/>
</dbReference>
<dbReference type="PDB" id="5O9Z">
    <property type="method" value="EM"/>
    <property type="resolution" value="4.50 A"/>
    <property type="chains" value="Z/g/n=1-119"/>
</dbReference>
<dbReference type="PDB" id="5XJC">
    <property type="method" value="EM"/>
    <property type="resolution" value="3.60 A"/>
    <property type="chains" value="c/j=1-119"/>
</dbReference>
<dbReference type="PDB" id="5XJL">
    <property type="method" value="X-ray"/>
    <property type="resolution" value="2.50 A"/>
    <property type="chains" value="A=1-119"/>
</dbReference>
<dbReference type="PDB" id="5XJQ">
    <property type="method" value="X-ray"/>
    <property type="resolution" value="3.28 A"/>
    <property type="chains" value="A=1-82"/>
</dbReference>
<dbReference type="PDB" id="5XJR">
    <property type="method" value="X-ray"/>
    <property type="resolution" value="3.12 A"/>
    <property type="chains" value="A=1-82"/>
</dbReference>
<dbReference type="PDB" id="5XJS">
    <property type="method" value="X-ray"/>
    <property type="resolution" value="3.38 A"/>
    <property type="chains" value="A=1-82"/>
</dbReference>
<dbReference type="PDB" id="5XJT">
    <property type="method" value="X-ray"/>
    <property type="resolution" value="2.92 A"/>
    <property type="chains" value="A=1-82"/>
</dbReference>
<dbReference type="PDB" id="5XJU">
    <property type="method" value="X-ray"/>
    <property type="resolution" value="2.58 A"/>
    <property type="chains" value="A=1-82"/>
</dbReference>
<dbReference type="PDB" id="5YZG">
    <property type="method" value="EM"/>
    <property type="resolution" value="4.10 A"/>
    <property type="chains" value="c/j=1-119"/>
</dbReference>
<dbReference type="PDB" id="5Z56">
    <property type="method" value="EM"/>
    <property type="resolution" value="5.10 A"/>
    <property type="chains" value="c/j=1-119"/>
</dbReference>
<dbReference type="PDB" id="5Z57">
    <property type="method" value="EM"/>
    <property type="resolution" value="6.50 A"/>
    <property type="chains" value="c/j=1-119"/>
</dbReference>
<dbReference type="PDB" id="5Z58">
    <property type="method" value="EM"/>
    <property type="resolution" value="4.90 A"/>
    <property type="chains" value="c/j=1-119"/>
</dbReference>
<dbReference type="PDB" id="6AH0">
    <property type="method" value="EM"/>
    <property type="resolution" value="5.70 A"/>
    <property type="chains" value="V/g/j=1-119"/>
</dbReference>
<dbReference type="PDB" id="6AHD">
    <property type="method" value="EM"/>
    <property type="resolution" value="3.80 A"/>
    <property type="chains" value="V/b/j=1-119"/>
</dbReference>
<dbReference type="PDB" id="6FF7">
    <property type="method" value="EM"/>
    <property type="resolution" value="4.50 A"/>
    <property type="chains" value="g/n=1-119"/>
</dbReference>
<dbReference type="PDB" id="6ICZ">
    <property type="method" value="EM"/>
    <property type="resolution" value="3.00 A"/>
    <property type="chains" value="c/j=1-119"/>
</dbReference>
<dbReference type="PDB" id="6ID0">
    <property type="method" value="EM"/>
    <property type="resolution" value="2.90 A"/>
    <property type="chains" value="c/j=1-119"/>
</dbReference>
<dbReference type="PDB" id="6ID1">
    <property type="method" value="EM"/>
    <property type="resolution" value="2.86 A"/>
    <property type="chains" value="c/j=1-119"/>
</dbReference>
<dbReference type="PDB" id="6QDV">
    <property type="method" value="EM"/>
    <property type="resolution" value="3.30 A"/>
    <property type="chains" value="h/l=1-78"/>
</dbReference>
<dbReference type="PDB" id="6QW6">
    <property type="method" value="EM"/>
    <property type="resolution" value="2.92 A"/>
    <property type="chains" value="41/51=1-119"/>
</dbReference>
<dbReference type="PDB" id="6QX9">
    <property type="method" value="EM"/>
    <property type="resolution" value="3.28 A"/>
    <property type="chains" value="11/21/41/51=1-119"/>
</dbReference>
<dbReference type="PDB" id="6Y53">
    <property type="method" value="EM"/>
    <property type="resolution" value="7.10 A"/>
    <property type="chains" value="n=1-119"/>
</dbReference>
<dbReference type="PDB" id="6Y5Q">
    <property type="method" value="EM"/>
    <property type="resolution" value="7.10 A"/>
    <property type="chains" value="n=1-119"/>
</dbReference>
<dbReference type="PDB" id="7A5P">
    <property type="method" value="EM"/>
    <property type="resolution" value="5.00 A"/>
    <property type="chains" value="c/n=1-119"/>
</dbReference>
<dbReference type="PDB" id="7ABG">
    <property type="method" value="EM"/>
    <property type="resolution" value="7.80 A"/>
    <property type="chains" value="g/n=1-119"/>
</dbReference>
<dbReference type="PDB" id="7ABI">
    <property type="method" value="EM"/>
    <property type="resolution" value="8.00 A"/>
    <property type="chains" value="g/n=1-119"/>
</dbReference>
<dbReference type="PDB" id="7B0Y">
    <property type="method" value="EM"/>
    <property type="resolution" value="3.60 A"/>
    <property type="chains" value="k=1-119"/>
</dbReference>
<dbReference type="PDB" id="7DVQ">
    <property type="method" value="EM"/>
    <property type="resolution" value="2.89 A"/>
    <property type="chains" value="c/j=1-119"/>
</dbReference>
<dbReference type="PDB" id="7EVO">
    <property type="method" value="EM"/>
    <property type="resolution" value="2.50 A"/>
    <property type="chains" value="g=1-119"/>
</dbReference>
<dbReference type="PDB" id="7QTT">
    <property type="method" value="EM"/>
    <property type="resolution" value="3.10 A"/>
    <property type="chains" value="k=1-119"/>
</dbReference>
<dbReference type="PDB" id="7VPX">
    <property type="method" value="EM"/>
    <property type="resolution" value="3.00 A"/>
    <property type="chains" value="g/h=1-119"/>
</dbReference>
<dbReference type="PDB" id="7W59">
    <property type="method" value="EM"/>
    <property type="resolution" value="3.60 A"/>
    <property type="chains" value="c/j=1-119"/>
</dbReference>
<dbReference type="PDB" id="7W5A">
    <property type="method" value="EM"/>
    <property type="resolution" value="3.60 A"/>
    <property type="chains" value="c/j=1-119"/>
</dbReference>
<dbReference type="PDB" id="7W5B">
    <property type="method" value="EM"/>
    <property type="resolution" value="4.30 A"/>
    <property type="chains" value="c/j=1-119"/>
</dbReference>
<dbReference type="PDB" id="8C6J">
    <property type="method" value="EM"/>
    <property type="resolution" value="2.80 A"/>
    <property type="chains" value="c/l=1-119"/>
</dbReference>
<dbReference type="PDB" id="8CH6">
    <property type="method" value="EM"/>
    <property type="resolution" value="5.90 A"/>
    <property type="chains" value="5/k=1-119"/>
</dbReference>
<dbReference type="PDB" id="8H6E">
    <property type="method" value="EM"/>
    <property type="resolution" value="3.20 A"/>
    <property type="chains" value="2b/4b/5b=1-119"/>
</dbReference>
<dbReference type="PDB" id="8H6J">
    <property type="method" value="EM"/>
    <property type="resolution" value="3.25 A"/>
    <property type="chains" value="2b/4b/5b=1-119"/>
</dbReference>
<dbReference type="PDB" id="8H6K">
    <property type="method" value="EM"/>
    <property type="resolution" value="2.70 A"/>
    <property type="chains" value="2b/4b/5b=1-119"/>
</dbReference>
<dbReference type="PDB" id="8H6L">
    <property type="method" value="EM"/>
    <property type="resolution" value="2.60 A"/>
    <property type="chains" value="2b/4b/5b=1-119"/>
</dbReference>
<dbReference type="PDB" id="8HK1">
    <property type="method" value="EM"/>
    <property type="resolution" value="2.70 A"/>
    <property type="chains" value="g=1-119"/>
</dbReference>
<dbReference type="PDB" id="8I0P">
    <property type="method" value="EM"/>
    <property type="resolution" value="3.40 A"/>
    <property type="chains" value="b/n=1-119"/>
</dbReference>
<dbReference type="PDB" id="8I0R">
    <property type="method" value="EM"/>
    <property type="resolution" value="3.00 A"/>
    <property type="chains" value="b/n=1-119"/>
</dbReference>
<dbReference type="PDB" id="8I0S">
    <property type="method" value="EM"/>
    <property type="resolution" value="4.20 A"/>
    <property type="chains" value="b/n=1-119"/>
</dbReference>
<dbReference type="PDB" id="8I0T">
    <property type="method" value="EM"/>
    <property type="resolution" value="3.00 A"/>
    <property type="chains" value="b/n=1-119"/>
</dbReference>
<dbReference type="PDB" id="8I0U">
    <property type="method" value="EM"/>
    <property type="resolution" value="3.30 A"/>
    <property type="chains" value="b/n=1-119"/>
</dbReference>
<dbReference type="PDB" id="8I0V">
    <property type="method" value="EM"/>
    <property type="resolution" value="3.00 A"/>
    <property type="chains" value="b/n=1-119"/>
</dbReference>
<dbReference type="PDB" id="8I0W">
    <property type="method" value="EM"/>
    <property type="resolution" value="3.40 A"/>
    <property type="chains" value="b/j=1-119"/>
</dbReference>
<dbReference type="PDB" id="8Q7Q">
    <property type="method" value="EM"/>
    <property type="resolution" value="3.20 A"/>
    <property type="chains" value="a=1-119"/>
</dbReference>
<dbReference type="PDB" id="8Q7V">
    <property type="method" value="EM"/>
    <property type="resolution" value="3.80 A"/>
    <property type="chains" value="a=1-119"/>
</dbReference>
<dbReference type="PDB" id="8Q7W">
    <property type="method" value="EM"/>
    <property type="resolution" value="3.90 A"/>
    <property type="chains" value="a=1-119"/>
</dbReference>
<dbReference type="PDB" id="8Q7X">
    <property type="method" value="EM"/>
    <property type="resolution" value="4.60 A"/>
    <property type="chains" value="a=1-119"/>
</dbReference>
<dbReference type="PDB" id="8Q91">
    <property type="method" value="EM"/>
    <property type="resolution" value="3.10 A"/>
    <property type="chains" value="i=1-119"/>
</dbReference>
<dbReference type="PDB" id="8QO9">
    <property type="method" value="EM"/>
    <property type="resolution" value="5.29 A"/>
    <property type="chains" value="21/41/51=1-119"/>
</dbReference>
<dbReference type="PDB" id="8QXD">
    <property type="method" value="EM"/>
    <property type="resolution" value="9.60 A"/>
    <property type="chains" value="21/41=1-119, 51=1-82"/>
</dbReference>
<dbReference type="PDB" id="8QZS">
    <property type="method" value="EM"/>
    <property type="resolution" value="4.10 A"/>
    <property type="chains" value="21/41/51=1-119"/>
</dbReference>
<dbReference type="PDB" id="8R08">
    <property type="method" value="EM"/>
    <property type="resolution" value="6.10 A"/>
    <property type="chains" value="11/21/41/51=1-119"/>
</dbReference>
<dbReference type="PDB" id="8R09">
    <property type="method" value="EM"/>
    <property type="resolution" value="4.30 A"/>
    <property type="chains" value="21/41/51=1-119"/>
</dbReference>
<dbReference type="PDB" id="8R0A">
    <property type="method" value="EM"/>
    <property type="resolution" value="5.80 A"/>
    <property type="chains" value="21/41/51=1-119"/>
</dbReference>
<dbReference type="PDB" id="8R0B">
    <property type="method" value="EM"/>
    <property type="resolution" value="4.40 A"/>
    <property type="chains" value="21/41/51=1-119"/>
</dbReference>
<dbReference type="PDB" id="8R7N">
    <property type="method" value="EM"/>
    <property type="resolution" value="3.40 A"/>
    <property type="chains" value="h=1-119"/>
</dbReference>
<dbReference type="PDB" id="8RC0">
    <property type="method" value="EM"/>
    <property type="resolution" value="3.20 A"/>
    <property type="chains" value="i=1-119"/>
</dbReference>
<dbReference type="PDB" id="8RM5">
    <property type="method" value="EM"/>
    <property type="resolution" value="6.90 A"/>
    <property type="chains" value="21/41/51=1-119"/>
</dbReference>
<dbReference type="PDB" id="8RO2">
    <property type="method" value="EM"/>
    <property type="resolution" value="3.50 A"/>
    <property type="chains" value="c=1-119"/>
</dbReference>
<dbReference type="PDB" id="8Y6O">
    <property type="method" value="EM"/>
    <property type="resolution" value="3.38 A"/>
    <property type="chains" value="b/i/p=1-119"/>
</dbReference>
<dbReference type="PDB" id="8Y7E">
    <property type="method" value="EM"/>
    <property type="resolution" value="4.66 A"/>
    <property type="chains" value="j=1-119"/>
</dbReference>
<dbReference type="PDB" id="9E3B">
    <property type="method" value="EM"/>
    <property type="resolution" value="3.06 A"/>
    <property type="chains" value="M/N/O/P=1-119"/>
</dbReference>
<dbReference type="PDB" id="9E3C">
    <property type="method" value="EM"/>
    <property type="resolution" value="3.19 A"/>
    <property type="chains" value="M=1-119"/>
</dbReference>
<dbReference type="PDB" id="9FMD">
    <property type="method" value="EM"/>
    <property type="resolution" value="3.30 A"/>
    <property type="chains" value="c/j=1-119"/>
</dbReference>
<dbReference type="PDB" id="9GBW">
    <property type="method" value="EM"/>
    <property type="resolution" value="3.50 A"/>
    <property type="chains" value="h=1-119"/>
</dbReference>
<dbReference type="PDB" id="9GC0">
    <property type="method" value="EM"/>
    <property type="resolution" value="3.20 A"/>
    <property type="chains" value="h=1-119"/>
</dbReference>
<dbReference type="PDB" id="9GCL">
    <property type="method" value="EM"/>
    <property type="resolution" value="3.00 A"/>
    <property type="chains" value="h=1-119"/>
</dbReference>
<dbReference type="PDBsum" id="1B34"/>
<dbReference type="PDBsum" id="3CW1"/>
<dbReference type="PDBsum" id="3JCR"/>
<dbReference type="PDBsum" id="3PGW"/>
<dbReference type="PDBsum" id="4F7U"/>
<dbReference type="PDBsum" id="4PJO"/>
<dbReference type="PDBsum" id="4V98"/>
<dbReference type="PDBsum" id="4WZJ"/>
<dbReference type="PDBsum" id="5MQF"/>
<dbReference type="PDBsum" id="5O9Z"/>
<dbReference type="PDBsum" id="5XJC"/>
<dbReference type="PDBsum" id="5XJL"/>
<dbReference type="PDBsum" id="5XJQ"/>
<dbReference type="PDBsum" id="5XJR"/>
<dbReference type="PDBsum" id="5XJS"/>
<dbReference type="PDBsum" id="5XJT"/>
<dbReference type="PDBsum" id="5XJU"/>
<dbReference type="PDBsum" id="5YZG"/>
<dbReference type="PDBsum" id="5Z56"/>
<dbReference type="PDBsum" id="5Z57"/>
<dbReference type="PDBsum" id="5Z58"/>
<dbReference type="PDBsum" id="6AH0"/>
<dbReference type="PDBsum" id="6AHD"/>
<dbReference type="PDBsum" id="6FF7"/>
<dbReference type="PDBsum" id="6ICZ"/>
<dbReference type="PDBsum" id="6ID0"/>
<dbReference type="PDBsum" id="6ID1"/>
<dbReference type="PDBsum" id="6QDV"/>
<dbReference type="PDBsum" id="6QW6"/>
<dbReference type="PDBsum" id="6QX9"/>
<dbReference type="PDBsum" id="6Y53"/>
<dbReference type="PDBsum" id="6Y5Q"/>
<dbReference type="PDBsum" id="7A5P"/>
<dbReference type="PDBsum" id="7ABG"/>
<dbReference type="PDBsum" id="7ABI"/>
<dbReference type="PDBsum" id="7B0Y"/>
<dbReference type="PDBsum" id="7DVQ"/>
<dbReference type="PDBsum" id="7EVO"/>
<dbReference type="PDBsum" id="7QTT"/>
<dbReference type="PDBsum" id="7VPX"/>
<dbReference type="PDBsum" id="7W59"/>
<dbReference type="PDBsum" id="7W5A"/>
<dbReference type="PDBsum" id="7W5B"/>
<dbReference type="PDBsum" id="8C6J"/>
<dbReference type="PDBsum" id="8CH6"/>
<dbReference type="PDBsum" id="8H6E"/>
<dbReference type="PDBsum" id="8H6J"/>
<dbReference type="PDBsum" id="8H6K"/>
<dbReference type="PDBsum" id="8H6L"/>
<dbReference type="PDBsum" id="8HK1"/>
<dbReference type="PDBsum" id="8I0P"/>
<dbReference type="PDBsum" id="8I0R"/>
<dbReference type="PDBsum" id="8I0S"/>
<dbReference type="PDBsum" id="8I0T"/>
<dbReference type="PDBsum" id="8I0U"/>
<dbReference type="PDBsum" id="8I0V"/>
<dbReference type="PDBsum" id="8I0W"/>
<dbReference type="PDBsum" id="8Q7Q"/>
<dbReference type="PDBsum" id="8Q7V"/>
<dbReference type="PDBsum" id="8Q7W"/>
<dbReference type="PDBsum" id="8Q7X"/>
<dbReference type="PDBsum" id="8Q91"/>
<dbReference type="PDBsum" id="8QO9"/>
<dbReference type="PDBsum" id="8QXD"/>
<dbReference type="PDBsum" id="8QZS"/>
<dbReference type="PDBsum" id="8R08"/>
<dbReference type="PDBsum" id="8R09"/>
<dbReference type="PDBsum" id="8R0A"/>
<dbReference type="PDBsum" id="8R0B"/>
<dbReference type="PDBsum" id="8R7N"/>
<dbReference type="PDBsum" id="8RC0"/>
<dbReference type="PDBsum" id="8RM5"/>
<dbReference type="PDBsum" id="8RO2"/>
<dbReference type="PDBsum" id="8Y6O"/>
<dbReference type="PDBsum" id="8Y7E"/>
<dbReference type="PDBsum" id="9E3B"/>
<dbReference type="PDBsum" id="9E3C"/>
<dbReference type="PDBsum" id="9FMD"/>
<dbReference type="PDBsum" id="9GBW"/>
<dbReference type="PDBsum" id="9GC0"/>
<dbReference type="PDBsum" id="9GCL"/>
<dbReference type="EMDB" id="EMD-10689"/>
<dbReference type="EMDB" id="EMD-11695"/>
<dbReference type="EMDB" id="EMD-11697"/>
<dbReference type="EMDB" id="EMD-11972"/>
<dbReference type="EMDB" id="EMD-14146"/>
<dbReference type="EMDB" id="EMD-16452"/>
<dbReference type="EMDB" id="EMD-16658"/>
<dbReference type="EMDB" id="EMD-18229"/>
<dbReference type="EMDB" id="EMD-18234"/>
<dbReference type="EMDB" id="EMD-18235"/>
<dbReference type="EMDB" id="EMD-18237"/>
<dbReference type="EMDB" id="EMD-18267"/>
<dbReference type="EMDB" id="EMD-18529"/>
<dbReference type="EMDB" id="EMD-18718"/>
<dbReference type="EMDB" id="EMD-18781"/>
<dbReference type="EMDB" id="EMD-18786"/>
<dbReference type="EMDB" id="EMD-18787"/>
<dbReference type="EMDB" id="EMD-18788"/>
<dbReference type="EMDB" id="EMD-18789"/>
<dbReference type="EMDB" id="EMD-18984"/>
<dbReference type="EMDB" id="EMD-19041"/>
<dbReference type="EMDB" id="EMD-19349"/>
<dbReference type="EMDB" id="EMD-19399"/>
<dbReference type="EMDB" id="EMD-30875"/>
<dbReference type="EMDB" id="EMD-31334"/>
<dbReference type="EMDB" id="EMD-32074"/>
<dbReference type="EMDB" id="EMD-32317"/>
<dbReference type="EMDB" id="EMD-32319"/>
<dbReference type="EMDB" id="EMD-32321"/>
<dbReference type="EMDB" id="EMD-34500"/>
<dbReference type="EMDB" id="EMD-34505"/>
<dbReference type="EMDB" id="EMD-34507"/>
<dbReference type="EMDB" id="EMD-34508"/>
<dbReference type="EMDB" id="EMD-34841"/>
<dbReference type="EMDB" id="EMD-35105"/>
<dbReference type="EMDB" id="EMD-35107"/>
<dbReference type="EMDB" id="EMD-35108"/>
<dbReference type="EMDB" id="EMD-35109"/>
<dbReference type="EMDB" id="EMD-35110"/>
<dbReference type="EMDB" id="EMD-35111"/>
<dbReference type="EMDB" id="EMD-35113"/>
<dbReference type="EMDB" id="EMD-3545"/>
<dbReference type="EMDB" id="EMD-3766"/>
<dbReference type="EMDB" id="EMD-38993"/>
<dbReference type="EMDB" id="EMD-39013"/>
<dbReference type="EMDB" id="EMD-4525"/>
<dbReference type="EMDB" id="EMD-4658"/>
<dbReference type="EMDB" id="EMD-4665"/>
<dbReference type="EMDB" id="EMD-47477"/>
<dbReference type="EMDB" id="EMD-47478"/>
<dbReference type="EMDB" id="EMD-51223"/>
<dbReference type="EMDB" id="EMD-51226"/>
<dbReference type="EMDB" id="EMD-51233"/>
<dbReference type="EMDB" id="EMD-6721"/>
<dbReference type="EMDB" id="EMD-6864"/>
<dbReference type="EMDB" id="EMD-6889"/>
<dbReference type="EMDB" id="EMD-6890"/>
<dbReference type="EMDB" id="EMD-6891"/>
<dbReference type="EMDB" id="EMD-9621"/>
<dbReference type="EMDB" id="EMD-9624"/>
<dbReference type="EMDB" id="EMD-9645"/>
<dbReference type="EMDB" id="EMD-9646"/>
<dbReference type="EMDB" id="EMD-9647"/>
<dbReference type="SMR" id="P62314"/>
<dbReference type="BioGRID" id="112516">
    <property type="interactions" value="358"/>
</dbReference>
<dbReference type="ComplexPortal" id="CPX-2391">
    <property type="entry name" value="U4/U6.U5 small nuclear ribonucleoprotein complex"/>
</dbReference>
<dbReference type="ComplexPortal" id="CPX-2392">
    <property type="entry name" value="U1 small nuclear ribonucleoprotein complex"/>
</dbReference>
<dbReference type="ComplexPortal" id="CPX-2539">
    <property type="entry name" value="U2 small nuclear ribonucleoprotein complex"/>
</dbReference>
<dbReference type="ComplexPortal" id="CPX-6033">
    <property type="entry name" value="Sm complex"/>
</dbReference>
<dbReference type="CORUM" id="P62314"/>
<dbReference type="DIP" id="DIP-31207N"/>
<dbReference type="FunCoup" id="P62314">
    <property type="interactions" value="2939"/>
</dbReference>
<dbReference type="IntAct" id="P62314">
    <property type="interactions" value="124"/>
</dbReference>
<dbReference type="MINT" id="P62314"/>
<dbReference type="STRING" id="9606.ENSP00000300413"/>
<dbReference type="GlyGen" id="P62314">
    <property type="glycosylation" value="2 sites, 1 N-linked glycan (1 site), 1 O-linked glycan (1 site)"/>
</dbReference>
<dbReference type="iPTMnet" id="P62314"/>
<dbReference type="PhosphoSitePlus" id="P62314"/>
<dbReference type="SwissPalm" id="P62314"/>
<dbReference type="BioMuta" id="SNRPD1"/>
<dbReference type="DMDM" id="51338665"/>
<dbReference type="jPOST" id="P62314"/>
<dbReference type="MassIVE" id="P62314"/>
<dbReference type="PaxDb" id="9606-ENSP00000300413"/>
<dbReference type="PeptideAtlas" id="P62314"/>
<dbReference type="PRIDE" id="P62314"/>
<dbReference type="ProteomicsDB" id="57391"/>
<dbReference type="Pumba" id="P62314"/>
<dbReference type="TopDownProteomics" id="P62314"/>
<dbReference type="ABCD" id="P62314">
    <property type="antibodies" value="7 sequenced antibodies"/>
</dbReference>
<dbReference type="Antibodypedia" id="7243">
    <property type="antibodies" value="179 antibodies from 27 providers"/>
</dbReference>
<dbReference type="DNASU" id="6632"/>
<dbReference type="Ensembl" id="ENST00000300413.10">
    <property type="protein sequence ID" value="ENSP00000300413.4"/>
    <property type="gene ID" value="ENSG00000167088.11"/>
</dbReference>
<dbReference type="GeneID" id="6632"/>
<dbReference type="KEGG" id="hsa:6632"/>
<dbReference type="MANE-Select" id="ENST00000300413.10">
    <property type="protein sequence ID" value="ENSP00000300413.4"/>
    <property type="RefSeq nucleotide sequence ID" value="NM_006938.4"/>
    <property type="RefSeq protein sequence ID" value="NP_008869.1"/>
</dbReference>
<dbReference type="UCSC" id="uc002ktj.2">
    <property type="organism name" value="human"/>
</dbReference>
<dbReference type="AGR" id="HGNC:11158"/>
<dbReference type="CTD" id="6632"/>
<dbReference type="DisGeNET" id="6632"/>
<dbReference type="GeneCards" id="SNRPD1"/>
<dbReference type="HGNC" id="HGNC:11158">
    <property type="gene designation" value="SNRPD1"/>
</dbReference>
<dbReference type="HPA" id="ENSG00000167088">
    <property type="expression patterns" value="Low tissue specificity"/>
</dbReference>
<dbReference type="MIM" id="601063">
    <property type="type" value="gene"/>
</dbReference>
<dbReference type="neXtProt" id="NX_P62314"/>
<dbReference type="OpenTargets" id="ENSG00000167088"/>
<dbReference type="PharmGKB" id="PA164742464"/>
<dbReference type="VEuPathDB" id="HostDB:ENSG00000167088"/>
<dbReference type="eggNOG" id="KOG3428">
    <property type="taxonomic scope" value="Eukaryota"/>
</dbReference>
<dbReference type="GeneTree" id="ENSGT00510000047245"/>
<dbReference type="HOGENOM" id="CLU_123956_3_0_1"/>
<dbReference type="InParanoid" id="P62314"/>
<dbReference type="OMA" id="TFLMKLT"/>
<dbReference type="OrthoDB" id="9626941at2759"/>
<dbReference type="PAN-GO" id="P62314">
    <property type="GO annotations" value="13 GO annotations based on evolutionary models"/>
</dbReference>
<dbReference type="PhylomeDB" id="P62314"/>
<dbReference type="TreeFam" id="TF314224"/>
<dbReference type="PathwayCommons" id="P62314"/>
<dbReference type="Reactome" id="R-HSA-191859">
    <property type="pathway name" value="snRNP Assembly"/>
</dbReference>
<dbReference type="Reactome" id="R-HSA-72163">
    <property type="pathway name" value="mRNA Splicing - Major Pathway"/>
</dbReference>
<dbReference type="Reactome" id="R-HSA-72165">
    <property type="pathway name" value="mRNA Splicing - Minor Pathway"/>
</dbReference>
<dbReference type="Reactome" id="R-HSA-9754678">
    <property type="pathway name" value="SARS-CoV-2 modulates host translation machinery"/>
</dbReference>
<dbReference type="SignaLink" id="P62314"/>
<dbReference type="SIGNOR" id="P62314"/>
<dbReference type="BioGRID-ORCS" id="6632">
    <property type="hits" value="830 hits in 1097 CRISPR screens"/>
</dbReference>
<dbReference type="CD-CODE" id="6F24707C">
    <property type="entry name" value="Cajal body"/>
</dbReference>
<dbReference type="ChiTaRS" id="SNRPD1">
    <property type="organism name" value="human"/>
</dbReference>
<dbReference type="EvolutionaryTrace" id="P62314"/>
<dbReference type="GeneWiki" id="Small_nuclear_ribonucleoprotein_D1"/>
<dbReference type="GenomeRNAi" id="6632"/>
<dbReference type="Pharos" id="P62314">
    <property type="development level" value="Tbio"/>
</dbReference>
<dbReference type="PRO" id="PR:P62314"/>
<dbReference type="Proteomes" id="UP000005640">
    <property type="component" value="Chromosome 18"/>
</dbReference>
<dbReference type="RNAct" id="P62314">
    <property type="molecule type" value="protein"/>
</dbReference>
<dbReference type="Bgee" id="ENSG00000167088">
    <property type="expression patterns" value="Expressed in ganglionic eminence and 206 other cell types or tissues"/>
</dbReference>
<dbReference type="ExpressionAtlas" id="P62314">
    <property type="expression patterns" value="baseline and differential"/>
</dbReference>
<dbReference type="GO" id="GO:0071013">
    <property type="term" value="C:catalytic step 2 spliceosome"/>
    <property type="evidence" value="ECO:0000314"/>
    <property type="project" value="UniProtKB"/>
</dbReference>
<dbReference type="GO" id="GO:0000243">
    <property type="term" value="C:commitment complex"/>
    <property type="evidence" value="ECO:0000318"/>
    <property type="project" value="GO_Central"/>
</dbReference>
<dbReference type="GO" id="GO:0005829">
    <property type="term" value="C:cytosol"/>
    <property type="evidence" value="ECO:0000314"/>
    <property type="project" value="UniProtKB"/>
</dbReference>
<dbReference type="GO" id="GO:0034709">
    <property type="term" value="C:methylosome"/>
    <property type="evidence" value="ECO:0000314"/>
    <property type="project" value="UniProtKB"/>
</dbReference>
<dbReference type="GO" id="GO:0005654">
    <property type="term" value="C:nucleoplasm"/>
    <property type="evidence" value="ECO:0000304"/>
    <property type="project" value="Reactome"/>
</dbReference>
<dbReference type="GO" id="GO:0005634">
    <property type="term" value="C:nucleus"/>
    <property type="evidence" value="ECO:0000314"/>
    <property type="project" value="UniProtKB"/>
</dbReference>
<dbReference type="GO" id="GO:0034715">
    <property type="term" value="C:pICln-Sm protein complex"/>
    <property type="evidence" value="ECO:0000314"/>
    <property type="project" value="UniProtKB"/>
</dbReference>
<dbReference type="GO" id="GO:0071011">
    <property type="term" value="C:precatalytic spliceosome"/>
    <property type="evidence" value="ECO:0000318"/>
    <property type="project" value="GO_Central"/>
</dbReference>
<dbReference type="GO" id="GO:0030532">
    <property type="term" value="C:small nuclear ribonucleoprotein complex"/>
    <property type="evidence" value="ECO:0000304"/>
    <property type="project" value="ProtInc"/>
</dbReference>
<dbReference type="GO" id="GO:0034719">
    <property type="term" value="C:SMN-Sm protein complex"/>
    <property type="evidence" value="ECO:0000314"/>
    <property type="project" value="UniProtKB"/>
</dbReference>
<dbReference type="GO" id="GO:0005681">
    <property type="term" value="C:spliceosomal complex"/>
    <property type="evidence" value="ECO:0000353"/>
    <property type="project" value="ComplexPortal"/>
</dbReference>
<dbReference type="GO" id="GO:0097526">
    <property type="term" value="C:spliceosomal tri-snRNP complex"/>
    <property type="evidence" value="ECO:0000318"/>
    <property type="project" value="GO_Central"/>
</dbReference>
<dbReference type="GO" id="GO:0005685">
    <property type="term" value="C:U1 snRNP"/>
    <property type="evidence" value="ECO:0000314"/>
    <property type="project" value="UniProtKB"/>
</dbReference>
<dbReference type="GO" id="GO:0005689">
    <property type="term" value="C:U12-type spliceosomal complex"/>
    <property type="evidence" value="ECO:0000314"/>
    <property type="project" value="UniProtKB"/>
</dbReference>
<dbReference type="GO" id="GO:0005686">
    <property type="term" value="C:U2 snRNP"/>
    <property type="evidence" value="ECO:0000318"/>
    <property type="project" value="GO_Central"/>
</dbReference>
<dbReference type="GO" id="GO:0071007">
    <property type="term" value="C:U2-type catalytic step 2 spliceosome"/>
    <property type="evidence" value="ECO:0000314"/>
    <property type="project" value="UniProtKB"/>
</dbReference>
<dbReference type="GO" id="GO:0071005">
    <property type="term" value="C:U2-type precatalytic spliceosome"/>
    <property type="evidence" value="ECO:0000314"/>
    <property type="project" value="UniProtKB"/>
</dbReference>
<dbReference type="GO" id="GO:0005684">
    <property type="term" value="C:U2-type spliceosomal complex"/>
    <property type="evidence" value="ECO:0000314"/>
    <property type="project" value="UniProtKB"/>
</dbReference>
<dbReference type="GO" id="GO:0005687">
    <property type="term" value="C:U4 snRNP"/>
    <property type="evidence" value="ECO:0000314"/>
    <property type="project" value="UniProtKB"/>
</dbReference>
<dbReference type="GO" id="GO:0046540">
    <property type="term" value="C:U4/U6 x U5 tri-snRNP complex"/>
    <property type="evidence" value="ECO:0000314"/>
    <property type="project" value="UniProtKB"/>
</dbReference>
<dbReference type="GO" id="GO:0005682">
    <property type="term" value="C:U5 snRNP"/>
    <property type="evidence" value="ECO:0000318"/>
    <property type="project" value="GO_Central"/>
</dbReference>
<dbReference type="GO" id="GO:0003723">
    <property type="term" value="F:RNA binding"/>
    <property type="evidence" value="ECO:0007005"/>
    <property type="project" value="UniProtKB"/>
</dbReference>
<dbReference type="GO" id="GO:1990446">
    <property type="term" value="F:U1 snRNP binding"/>
    <property type="evidence" value="ECO:0007669"/>
    <property type="project" value="Ensembl"/>
</dbReference>
<dbReference type="GO" id="GO:0036261">
    <property type="term" value="P:7-methylguanosine cap hypermethylation"/>
    <property type="evidence" value="ECO:0000303"/>
    <property type="project" value="ComplexPortal"/>
</dbReference>
<dbReference type="GO" id="GO:0000398">
    <property type="term" value="P:mRNA splicing, via spliceosome"/>
    <property type="evidence" value="ECO:0000314"/>
    <property type="project" value="UniProtKB"/>
</dbReference>
<dbReference type="GO" id="GO:0008380">
    <property type="term" value="P:RNA splicing"/>
    <property type="evidence" value="ECO:0000304"/>
    <property type="project" value="ProtInc"/>
</dbReference>
<dbReference type="GO" id="GO:0000245">
    <property type="term" value="P:spliceosomal complex assembly"/>
    <property type="evidence" value="ECO:0000304"/>
    <property type="project" value="ProtInc"/>
</dbReference>
<dbReference type="GO" id="GO:0000387">
    <property type="term" value="P:spliceosomal snRNP assembly"/>
    <property type="evidence" value="ECO:0000314"/>
    <property type="project" value="UniProtKB"/>
</dbReference>
<dbReference type="GO" id="GO:1903241">
    <property type="term" value="P:U2-type prespliceosome assembly"/>
    <property type="evidence" value="ECO:0000303"/>
    <property type="project" value="ComplexPortal"/>
</dbReference>
<dbReference type="CDD" id="cd01724">
    <property type="entry name" value="Sm_D1"/>
    <property type="match status" value="1"/>
</dbReference>
<dbReference type="FunFam" id="2.30.30.100:FF:000016">
    <property type="entry name" value="Small nuclear ribonucleoprotein Sm D1"/>
    <property type="match status" value="1"/>
</dbReference>
<dbReference type="Gene3D" id="2.30.30.100">
    <property type="match status" value="2"/>
</dbReference>
<dbReference type="IDEAL" id="IID00159"/>
<dbReference type="InterPro" id="IPR027141">
    <property type="entry name" value="LSm4/Sm_D1/D3"/>
</dbReference>
<dbReference type="InterPro" id="IPR010920">
    <property type="entry name" value="LSM_dom_sf"/>
</dbReference>
<dbReference type="InterPro" id="IPR047575">
    <property type="entry name" value="Sm"/>
</dbReference>
<dbReference type="InterPro" id="IPR034102">
    <property type="entry name" value="Sm_D1"/>
</dbReference>
<dbReference type="InterPro" id="IPR001163">
    <property type="entry name" value="Sm_dom_euk/arc"/>
</dbReference>
<dbReference type="PANTHER" id="PTHR23338">
    <property type="entry name" value="SMALL NUCLEAR RIBONUCLEOPROTEIN SM"/>
    <property type="match status" value="1"/>
</dbReference>
<dbReference type="Pfam" id="PF01423">
    <property type="entry name" value="LSM"/>
    <property type="match status" value="1"/>
</dbReference>
<dbReference type="SMART" id="SM00651">
    <property type="entry name" value="Sm"/>
    <property type="match status" value="1"/>
</dbReference>
<dbReference type="SUPFAM" id="SSF50182">
    <property type="entry name" value="Sm-like ribonucleoproteins"/>
    <property type="match status" value="1"/>
</dbReference>
<dbReference type="PROSITE" id="PS52002">
    <property type="entry name" value="SM"/>
    <property type="match status" value="1"/>
</dbReference>